<sequence length="93" mass="10682">MEPVDPELEPWNHPGSQPKTACNNCHCKVCCYHCVYCFTKKGLGISYGRKKRSQRRRTPQSNKSHQDPLPKQPLSQRLGDQTGQKEQKKTLES</sequence>
<protein>
    <recommendedName>
        <fullName evidence="1">Protein Tat</fullName>
    </recommendedName>
    <alternativeName>
        <fullName evidence="1">Transactivating regulatory protein</fullName>
    </alternativeName>
</protein>
<reference key="1">
    <citation type="journal article" date="2006" name="Science">
        <title>Chimpanzee reservoirs of pandemic and nonpandemic HIV-1.</title>
        <authorList>
            <person name="Keele B.F."/>
            <person name="Van Heuverswyn F."/>
            <person name="Li Y."/>
            <person name="Bailes E."/>
            <person name="Takehisa J."/>
            <person name="Santiago M.L."/>
            <person name="Bibollet-Ruche F."/>
            <person name="Chen Y."/>
            <person name="Wain L.V."/>
            <person name="Liegeois F."/>
            <person name="Loul S."/>
            <person name="Ngole E.M."/>
            <person name="Bienvenue Y."/>
            <person name="Delaporte E."/>
            <person name="Brookfield J.F."/>
            <person name="Sharp P.M."/>
            <person name="Shaw G.M."/>
            <person name="Peeters M."/>
            <person name="Hahn B.H."/>
        </authorList>
    </citation>
    <scope>NUCLEOTIDE SEQUENCE [GENOMIC RNA]</scope>
</reference>
<accession>Q1A246</accession>
<evidence type="ECO:0000255" key="1">
    <source>
        <dbReference type="HAMAP-Rule" id="MF_04079"/>
    </source>
</evidence>
<evidence type="ECO:0000256" key="2">
    <source>
        <dbReference type="SAM" id="MobiDB-lite"/>
    </source>
</evidence>
<organismHost>
    <name type="scientific">Pan troglodytes</name>
    <name type="common">Chimpanzee</name>
    <dbReference type="NCBI Taxonomy" id="9598"/>
</organismHost>
<proteinExistence type="inferred from homology"/>
<keyword id="KW-0007">Acetylation</keyword>
<keyword id="KW-0010">Activator</keyword>
<keyword id="KW-0014">AIDS</keyword>
<keyword id="KW-0053">Apoptosis</keyword>
<keyword id="KW-1035">Host cytoplasm</keyword>
<keyword id="KW-1048">Host nucleus</keyword>
<keyword id="KW-0945">Host-virus interaction</keyword>
<keyword id="KW-1090">Inhibition of host innate immune response by virus</keyword>
<keyword id="KW-1114">Inhibition of host interferon signaling pathway by virus</keyword>
<keyword id="KW-0922">Interferon antiviral system evasion</keyword>
<keyword id="KW-1017">Isopeptide bond</keyword>
<keyword id="KW-0479">Metal-binding</keyword>
<keyword id="KW-0488">Methylation</keyword>
<keyword id="KW-1122">Modulation of host chromatin by virus</keyword>
<keyword id="KW-1126">Modulation of host PP1 activity by virus</keyword>
<keyword id="KW-0597">Phosphoprotein</keyword>
<keyword id="KW-1185">Reference proteome</keyword>
<keyword id="KW-0694">RNA-binding</keyword>
<keyword id="KW-0964">Secreted</keyword>
<keyword id="KW-0804">Transcription</keyword>
<keyword id="KW-0805">Transcription regulation</keyword>
<keyword id="KW-0832">Ubl conjugation</keyword>
<keyword id="KW-0899">Viral immunoevasion</keyword>
<keyword id="KW-0862">Zinc</keyword>
<comment type="function">
    <text evidence="1">Transcriptional activator that increases RNA Pol II processivity, thereby increasing the level of full-length viral transcripts. Recognizes a hairpin structure at the 5'-LTR of the nascent viral mRNAs referred to as the transactivation responsive RNA element (TAR) and recruits the cyclin T1-CDK9 complex (P-TEFb complex) that will in turn hyperphosphorylate the RNA polymerase II to allow efficient elongation. The CDK9 component of P-TEFb and other Tat-activated kinases hyperphosphorylate the C-terminus of RNA Pol II that becomes stabilized and much more processive. Other factors such as HTATSF1/Tat-SF1, SUPT5H/SPT5, and HTATIP2 are also important for Tat's function. Besides its effect on RNA Pol II processivity, Tat induces chromatin remodeling of proviral genes by recruiting the histone acetyltransferases (HATs) CREBBP, EP300 and PCAF to the chromatin. This also contributes to the increase in proviral transcription rate, especially when the provirus integrates in transcriptionally silent region of the host genome. To ensure maximal activation of the LTR, Tat mediates nuclear translocation of NF-kappa-B by interacting with host RELA. Through its interaction with host TBP, Tat may also modulate transcription initiation. Tat can reactivate a latently infected cell by penetrating in it and transactivating its LTR promoter. In the cytoplasm, Tat is thought to act as a translational activator of HIV-1 mRNAs.</text>
</comment>
<comment type="function">
    <text evidence="1">Extracellular circulating Tat can be endocytosed by surrounding uninfected cells via the binding to several surface receptors such as CD26, CXCR4, heparan sulfate proteoglycans (HSPG) or LDLR. Neurons are rarely infected, but they internalize Tat via their LDLR. Through its interaction with nuclear HATs, Tat is potentially able to control the acetylation-dependent cellular gene expression. Modulates the expression of many cellular genes involved in cell survival, proliferation or in coding for cytokines or cytokine receptors. Tat plays a role in T-cell and neurons apoptosis. Tat induced neurotoxicity and apoptosis probably contribute to neuroAIDS. Circulating Tat also acts as a chemokine-like and/or growth factor-like molecule that binds to specific receptors on the surface of the cells, affecting many cellular pathways. In the vascular system, Tat binds to ITGAV/ITGB3 and ITGA5/ITGB1 integrins dimers at the surface of endothelial cells and competes with bFGF for heparin-binding sites, leading to an excess of soluble bFGF.</text>
</comment>
<comment type="subunit">
    <text evidence="1">Interacts with host CCNT1. Associates with the P-TEFb complex composed at least of Tat, P-TEFb (CDK9 and CCNT1), TAR RNA, RNA Pol II. Recruits the HATs CREBBP, TAF1/TFIID, EP300, PCAF and GCN5L2. Interacts with host KAT5/Tip60; this interaction targets the latter to degradation. Interacts with the host deacetylase SIRT1. Interacts with host capping enzyme RNGTT; this interaction stimulates RNGTT. Binds to host KDR, and to the host integrins ITGAV/ITGB3 and ITGA5/ITGB1. Interacts with host KPNB1/importin beta-1 without previous binding to KPNA1/importin alpha-1. Interacts with EIF2AK2. Interacts with host nucleosome assembly protein NAP1L1; this interaction may be required for the transport of Tat within the nucleus, since the two proteins interact at the nuclear rim. Interacts with host C1QBP/SF2P32; this interaction involves lysine-acetylated Tat. Interacts with the host chemokine receptors CCR2, CCR3 and CXCR4. Interacts with host DPP4/CD26; this interaction may trigger an anti-proliferative effect. Interacts with host LDLR. Interacts with the host extracellular matrix metalloproteinase MMP1. Interacts with host PRMT6; this interaction mediates Tat's methylation. Interacts with, and is ubiquitinated by MDM2/Hdm2. Interacts with host PSMC3 and HTATIP2. Interacts with STAB1; this interaction may overcome SATB1-mediated repression of IL2 and IL2RA (interleukin) in T cells by binding to the same domain than HDAC1. Interacts (when acetylated) with human CDK13, thereby increasing HIV-1 mRNA splicing and promoting the production of the doubly spliced HIV-1 protein Nef. Interacts with host TBP; this interaction modulates the activity of transcriptional pre-initiation complex. Interacts with host RELA.</text>
</comment>
<comment type="subcellular location">
    <subcellularLocation>
        <location evidence="1">Host nucleus</location>
        <location evidence="1">Host nucleolus</location>
    </subcellularLocation>
    <subcellularLocation>
        <location evidence="1">Host cytoplasm</location>
    </subcellularLocation>
    <subcellularLocation>
        <location evidence="1">Secreted</location>
    </subcellularLocation>
    <text evidence="1">Probably localizes to both nuclear and nucleolar compartments. Nuclear localization is mediated through the interaction of the nuclear localization signal with importin KPNB1. Secretion occurs through a Golgi-independent pathway. Tat is released from infected cells to the extracellular space where it remains associated to the cell membrane, or is secreted into the cerebrospinal fluid and sera. Extracellular Tat can be endocytosed by surrounding uninfected cells via binding to several receptors depending on the cell type.</text>
</comment>
<comment type="domain">
    <text evidence="1">The cell attachment site mediates the interaction with ITGAV/ITGB3 and ITGA5/ITGB1 integrins, leading to vascular cell migration and invasion. This interaction also provides endothelial cells with the adhesion signal they require to grow in response to mitogens.</text>
</comment>
<comment type="domain">
    <text evidence="1">The Cys-rich region may bind 2 zinc ions. This region is involved in binding to KAT5.</text>
</comment>
<comment type="domain">
    <text evidence="1">The transactivation domain mediates the interaction with CCNT1, GCN5L2, and MDM2.</text>
</comment>
<comment type="domain">
    <text evidence="1">The Arg-rich RNA-binding region binds the TAR RNA. This region also mediates the nuclear localization through direct binding to KPNB1 and is involved in Tat's transfer across cell membranes (protein transduction). The same region is required for the interaction with EP300, PCAF, EIF2AK2 and KDR.</text>
</comment>
<comment type="PTM">
    <text evidence="1">Asymmetrical arginine methylation by host PRMT6 seems to diminish the transactivation capacity of Tat and affects the interaction with host CCNT1.</text>
</comment>
<comment type="PTM">
    <text evidence="1">Acetylation by EP300, CREBBP, GCN5L2/GCN5 and PCAF regulates the transactivation activity of Tat. EP300-mediated acetylation of Lys-50 promotes dissociation of Tat from the TAR RNA through the competitive binding to PCAF's bromodomain. In addition, the non-acetylated Tat's N-terminus can also interact with PCAF. PCAF-mediated acetylation of Lys-28 enhances Tat's binding to CCNT1. Lys-50 is deacetylated by SIRT1.</text>
</comment>
<comment type="PTM">
    <text evidence="1">Polyubiquitination by host MDM2 does not target Tat to degradation, but activates its transactivation function and fosters interaction with CCNT1 and TAR RNA.</text>
</comment>
<comment type="PTM">
    <text evidence="1">Phosphorylated by EIF2AK2 on serine and threonine residues adjacent to the basic region important for TAR RNA binding and function. Phosphorylation of Tat by EIF2AK2 is dependent on the prior activation of EIF2AK2 by dsRNA.</text>
</comment>
<comment type="miscellaneous">
    <text evidence="1">HIV-1 lineages are divided in three main groups, M (for Major), O (for Outlier), and N (for New, or Non-M, Non-O). The vast majority of strains found worldwide belong to the group M. Group O seems to be endemic to and largely confined to Cameroon and neighboring countries in West Central Africa, where these viruses represent a small minority of HIV-1 strains. The group N is represented by a limited number of isolates from Cameroonian persons. The group M is further subdivided in 9 clades or subtypes (A to D, F to H, J and K).</text>
</comment>
<comment type="similarity">
    <text evidence="1">Belongs to the lentiviruses Tat family.</text>
</comment>
<name>TAT_SIVEK</name>
<dbReference type="EMBL" id="DQ373065">
    <property type="protein sequence ID" value="ABD19496.1"/>
    <property type="molecule type" value="Genomic_RNA"/>
</dbReference>
<dbReference type="SMR" id="Q1A246"/>
<dbReference type="Proteomes" id="UP000008436">
    <property type="component" value="Segment"/>
</dbReference>
<dbReference type="GO" id="GO:0005576">
    <property type="term" value="C:extracellular region"/>
    <property type="evidence" value="ECO:0007669"/>
    <property type="project" value="UniProtKB-SubCell"/>
</dbReference>
<dbReference type="GO" id="GO:0030430">
    <property type="term" value="C:host cell cytoplasm"/>
    <property type="evidence" value="ECO:0007669"/>
    <property type="project" value="UniProtKB-SubCell"/>
</dbReference>
<dbReference type="GO" id="GO:0044196">
    <property type="term" value="C:host cell nucleolus"/>
    <property type="evidence" value="ECO:0007669"/>
    <property type="project" value="UniProtKB-SubCell"/>
</dbReference>
<dbReference type="GO" id="GO:0042805">
    <property type="term" value="F:actinin binding"/>
    <property type="evidence" value="ECO:0007669"/>
    <property type="project" value="UniProtKB-UniRule"/>
</dbReference>
<dbReference type="GO" id="GO:0030332">
    <property type="term" value="F:cyclin binding"/>
    <property type="evidence" value="ECO:0007669"/>
    <property type="project" value="UniProtKB-UniRule"/>
</dbReference>
<dbReference type="GO" id="GO:0046872">
    <property type="term" value="F:metal ion binding"/>
    <property type="evidence" value="ECO:0007669"/>
    <property type="project" value="UniProtKB-UniRule"/>
</dbReference>
<dbReference type="GO" id="GO:0019904">
    <property type="term" value="F:protein domain specific binding"/>
    <property type="evidence" value="ECO:0007669"/>
    <property type="project" value="UniProtKB-UniRule"/>
</dbReference>
<dbReference type="GO" id="GO:0004865">
    <property type="term" value="F:protein serine/threonine phosphatase inhibitor activity"/>
    <property type="evidence" value="ECO:0007669"/>
    <property type="project" value="UniProtKB-KW"/>
</dbReference>
<dbReference type="GO" id="GO:0001070">
    <property type="term" value="F:RNA-binding transcription regulator activity"/>
    <property type="evidence" value="ECO:0007669"/>
    <property type="project" value="UniProtKB-UniRule"/>
</dbReference>
<dbReference type="GO" id="GO:1990970">
    <property type="term" value="F:trans-activation response element binding"/>
    <property type="evidence" value="ECO:0007669"/>
    <property type="project" value="UniProtKB-UniRule"/>
</dbReference>
<dbReference type="GO" id="GO:0006351">
    <property type="term" value="P:DNA-templated transcription"/>
    <property type="evidence" value="ECO:0007669"/>
    <property type="project" value="UniProtKB-UniRule"/>
</dbReference>
<dbReference type="GO" id="GO:0032968">
    <property type="term" value="P:positive regulation of transcription elongation by RNA polymerase II"/>
    <property type="evidence" value="ECO:0007669"/>
    <property type="project" value="UniProtKB-UniRule"/>
</dbReference>
<dbReference type="GO" id="GO:0050434">
    <property type="term" value="P:positive regulation of viral transcription"/>
    <property type="evidence" value="ECO:0007669"/>
    <property type="project" value="UniProtKB-UniRule"/>
</dbReference>
<dbReference type="GO" id="GO:0039525">
    <property type="term" value="P:symbiont-mediated perturbation of host chromatin organization"/>
    <property type="evidence" value="ECO:0007669"/>
    <property type="project" value="UniProtKB-UniRule"/>
</dbReference>
<dbReference type="GO" id="GO:0052170">
    <property type="term" value="P:symbiont-mediated suppression of host innate immune response"/>
    <property type="evidence" value="ECO:0007669"/>
    <property type="project" value="UniProtKB-KW"/>
</dbReference>
<dbReference type="GO" id="GO:0039606">
    <property type="term" value="P:symbiont-mediated suppression of host translation initiation"/>
    <property type="evidence" value="ECO:0007669"/>
    <property type="project" value="UniProtKB-KW"/>
</dbReference>
<dbReference type="GO" id="GO:0039502">
    <property type="term" value="P:symbiont-mediated suppression of host type I interferon-mediated signaling pathway"/>
    <property type="evidence" value="ECO:0007669"/>
    <property type="project" value="UniProtKB-UniRule"/>
</dbReference>
<dbReference type="Gene3D" id="4.10.20.10">
    <property type="entry name" value="Tat domain"/>
    <property type="match status" value="1"/>
</dbReference>
<dbReference type="HAMAP" id="MF_04079">
    <property type="entry name" value="HIV_TAT"/>
    <property type="match status" value="1"/>
</dbReference>
<dbReference type="InterPro" id="IPR001831">
    <property type="entry name" value="IV_Tat"/>
</dbReference>
<dbReference type="InterPro" id="IPR036963">
    <property type="entry name" value="Tat_dom_sf"/>
</dbReference>
<dbReference type="Pfam" id="PF00539">
    <property type="entry name" value="Tat"/>
    <property type="match status" value="1"/>
</dbReference>
<dbReference type="PRINTS" id="PR00055">
    <property type="entry name" value="HIVTATDOMAIN"/>
</dbReference>
<gene>
    <name evidence="1" type="primary">tat</name>
</gene>
<feature type="chain" id="PRO_0000248193" description="Protein Tat">
    <location>
        <begin position="1"/>
        <end position="93"/>
    </location>
</feature>
<feature type="region of interest" description="Transactivation" evidence="1">
    <location>
        <begin position="1"/>
        <end position="48"/>
    </location>
</feature>
<feature type="region of interest" description="Interaction with human CREBBP" evidence="1">
    <location>
        <begin position="1"/>
        <end position="24"/>
    </location>
</feature>
<feature type="region of interest" description="Cysteine-rich" evidence="1">
    <location>
        <begin position="22"/>
        <end position="37"/>
    </location>
</feature>
<feature type="region of interest" description="Core" evidence="1">
    <location>
        <begin position="38"/>
        <end position="48"/>
    </location>
</feature>
<feature type="region of interest" description="Disordered" evidence="2">
    <location>
        <begin position="48"/>
        <end position="93"/>
    </location>
</feature>
<feature type="region of interest" description="Interaction with the host capping enzyme RNGTT" evidence="1">
    <location>
        <begin position="49"/>
        <end position="86"/>
    </location>
</feature>
<feature type="short sequence motif" description="Nuclear localization signal, RNA-binding (TAR), and protein transduction" evidence="1">
    <location>
        <begin position="49"/>
        <end position="57"/>
    </location>
</feature>
<feature type="compositionally biased region" description="Basic residues" evidence="2">
    <location>
        <begin position="48"/>
        <end position="58"/>
    </location>
</feature>
<feature type="compositionally biased region" description="Polar residues" evidence="2">
    <location>
        <begin position="73"/>
        <end position="82"/>
    </location>
</feature>
<feature type="compositionally biased region" description="Basic and acidic residues" evidence="2">
    <location>
        <begin position="83"/>
        <end position="93"/>
    </location>
</feature>
<feature type="binding site" evidence="1">
    <location>
        <position position="22"/>
    </location>
    <ligand>
        <name>Zn(2+)</name>
        <dbReference type="ChEBI" id="CHEBI:29105"/>
        <label>1</label>
    </ligand>
</feature>
<feature type="binding site" evidence="1">
    <location>
        <position position="25"/>
    </location>
    <ligand>
        <name>Zn(2+)</name>
        <dbReference type="ChEBI" id="CHEBI:29105"/>
        <label>2</label>
    </ligand>
</feature>
<feature type="binding site" evidence="1">
    <location>
        <position position="27"/>
    </location>
    <ligand>
        <name>Zn(2+)</name>
        <dbReference type="ChEBI" id="CHEBI:29105"/>
        <label>2</label>
    </ligand>
</feature>
<feature type="binding site" evidence="1">
    <location>
        <position position="30"/>
    </location>
    <ligand>
        <name>Zn(2+)</name>
        <dbReference type="ChEBI" id="CHEBI:29105"/>
        <label>2</label>
    </ligand>
</feature>
<feature type="binding site" evidence="1">
    <location>
        <position position="33"/>
    </location>
    <ligand>
        <name>Zn(2+)</name>
        <dbReference type="ChEBI" id="CHEBI:29105"/>
        <label>1</label>
    </ligand>
</feature>
<feature type="binding site" evidence="1">
    <location>
        <position position="34"/>
    </location>
    <ligand>
        <name>Zn(2+)</name>
        <dbReference type="ChEBI" id="CHEBI:29105"/>
        <label>1</label>
    </ligand>
</feature>
<feature type="binding site" evidence="1">
    <location>
        <position position="37"/>
    </location>
    <ligand>
        <name>Zn(2+)</name>
        <dbReference type="ChEBI" id="CHEBI:29105"/>
        <label>1</label>
    </ligand>
</feature>
<feature type="site" description="Essential for Tat translocation through the endosomal membrane" evidence="1">
    <location>
        <position position="11"/>
    </location>
</feature>
<feature type="modified residue" description="N6-acetyllysine; by host PCAF" evidence="1">
    <location>
        <position position="28"/>
    </location>
</feature>
<feature type="modified residue" description="N6-acetyllysine; by host EP300 and GCN5L2" evidence="1">
    <location>
        <position position="50"/>
    </location>
</feature>
<feature type="modified residue" description="N6-acetyllysine; by host EP300 and GCN5L2" evidence="1">
    <location>
        <position position="51"/>
    </location>
</feature>
<feature type="modified residue" description="Asymmetric dimethylarginine; by host PRMT6" evidence="1">
    <location>
        <position position="52"/>
    </location>
</feature>
<feature type="cross-link" description="Glycyl lysine isopeptide (Lys-Gly) (interchain with G-Cter in ubiquitin)" evidence="1">
    <location>
        <position position="71"/>
    </location>
</feature>
<organism>
    <name type="scientific">Simian immunodeficiency virus (isolate EK505)</name>
    <name type="common">SIV-cpz</name>
    <name type="synonym">Chimpanzee immunodeficiency virus</name>
    <dbReference type="NCBI Taxonomy" id="388912"/>
    <lineage>
        <taxon>Viruses</taxon>
        <taxon>Riboviria</taxon>
        <taxon>Pararnavirae</taxon>
        <taxon>Artverviricota</taxon>
        <taxon>Revtraviricetes</taxon>
        <taxon>Ortervirales</taxon>
        <taxon>Retroviridae</taxon>
        <taxon>Orthoretrovirinae</taxon>
        <taxon>Lentivirus</taxon>
        <taxon>Simian immunodeficiency virus</taxon>
    </lineage>
</organism>